<evidence type="ECO:0000255" key="1">
    <source>
        <dbReference type="HAMAP-Rule" id="MF_00009"/>
    </source>
</evidence>
<accession>Q21C41</accession>
<comment type="function">
    <text evidence="1">Single strand-specific metallo-endoribonuclease involved in late-stage 70S ribosome quality control and in maturation of the 3' terminus of the 16S rRNA.</text>
</comment>
<comment type="cofactor">
    <cofactor evidence="1">
        <name>Zn(2+)</name>
        <dbReference type="ChEBI" id="CHEBI:29105"/>
    </cofactor>
    <text evidence="1">Binds 1 zinc ion.</text>
</comment>
<comment type="subcellular location">
    <subcellularLocation>
        <location evidence="1">Cytoplasm</location>
    </subcellularLocation>
</comment>
<comment type="similarity">
    <text evidence="1">Belongs to the endoribonuclease YbeY family.</text>
</comment>
<sequence>MTRFIPPATEVLIVADCWQAEAEAEAIVLRAIEAAAAMTDADTADAELAVMLTDDAGVQTLNANWRGIDKPTNVLSFPALQPEGDAPDDAPKMLGDIAIAYQTTRREADDEGKPFDHHLSHLAVHGFLHLVGYDHEKDAEAEAMESLEREILAQLGVPDPYADQDRVN</sequence>
<dbReference type="EC" id="3.1.-.-" evidence="1"/>
<dbReference type="EMBL" id="CP000301">
    <property type="protein sequence ID" value="ABD86045.1"/>
    <property type="molecule type" value="Genomic_DNA"/>
</dbReference>
<dbReference type="SMR" id="Q21C41"/>
<dbReference type="STRING" id="316056.RPC_0470"/>
<dbReference type="KEGG" id="rpc:RPC_0470"/>
<dbReference type="eggNOG" id="COG0319">
    <property type="taxonomic scope" value="Bacteria"/>
</dbReference>
<dbReference type="HOGENOM" id="CLU_106710_0_0_5"/>
<dbReference type="OrthoDB" id="9807740at2"/>
<dbReference type="GO" id="GO:0005737">
    <property type="term" value="C:cytoplasm"/>
    <property type="evidence" value="ECO:0007669"/>
    <property type="project" value="UniProtKB-SubCell"/>
</dbReference>
<dbReference type="GO" id="GO:0004222">
    <property type="term" value="F:metalloendopeptidase activity"/>
    <property type="evidence" value="ECO:0007669"/>
    <property type="project" value="InterPro"/>
</dbReference>
<dbReference type="GO" id="GO:0004521">
    <property type="term" value="F:RNA endonuclease activity"/>
    <property type="evidence" value="ECO:0007669"/>
    <property type="project" value="UniProtKB-UniRule"/>
</dbReference>
<dbReference type="GO" id="GO:0008270">
    <property type="term" value="F:zinc ion binding"/>
    <property type="evidence" value="ECO:0007669"/>
    <property type="project" value="UniProtKB-UniRule"/>
</dbReference>
<dbReference type="GO" id="GO:0006364">
    <property type="term" value="P:rRNA processing"/>
    <property type="evidence" value="ECO:0007669"/>
    <property type="project" value="UniProtKB-UniRule"/>
</dbReference>
<dbReference type="Gene3D" id="3.40.390.30">
    <property type="entry name" value="Metalloproteases ('zincins'), catalytic domain"/>
    <property type="match status" value="1"/>
</dbReference>
<dbReference type="HAMAP" id="MF_00009">
    <property type="entry name" value="Endoribonucl_YbeY"/>
    <property type="match status" value="1"/>
</dbReference>
<dbReference type="InterPro" id="IPR023091">
    <property type="entry name" value="MetalPrtase_cat_dom_sf_prd"/>
</dbReference>
<dbReference type="InterPro" id="IPR002036">
    <property type="entry name" value="YbeY"/>
</dbReference>
<dbReference type="InterPro" id="IPR020549">
    <property type="entry name" value="YbeY_CS"/>
</dbReference>
<dbReference type="NCBIfam" id="TIGR00043">
    <property type="entry name" value="rRNA maturation RNase YbeY"/>
    <property type="match status" value="1"/>
</dbReference>
<dbReference type="PANTHER" id="PTHR46986">
    <property type="entry name" value="ENDORIBONUCLEASE YBEY, CHLOROPLASTIC"/>
    <property type="match status" value="1"/>
</dbReference>
<dbReference type="PANTHER" id="PTHR46986:SF1">
    <property type="entry name" value="ENDORIBONUCLEASE YBEY, CHLOROPLASTIC"/>
    <property type="match status" value="1"/>
</dbReference>
<dbReference type="Pfam" id="PF02130">
    <property type="entry name" value="YbeY"/>
    <property type="match status" value="1"/>
</dbReference>
<dbReference type="SUPFAM" id="SSF55486">
    <property type="entry name" value="Metalloproteases ('zincins'), catalytic domain"/>
    <property type="match status" value="1"/>
</dbReference>
<dbReference type="PROSITE" id="PS01306">
    <property type="entry name" value="UPF0054"/>
    <property type="match status" value="1"/>
</dbReference>
<protein>
    <recommendedName>
        <fullName evidence="1">Endoribonuclease YbeY</fullName>
        <ecNumber evidence="1">3.1.-.-</ecNumber>
    </recommendedName>
</protein>
<organism>
    <name type="scientific">Rhodopseudomonas palustris (strain BisB18)</name>
    <dbReference type="NCBI Taxonomy" id="316056"/>
    <lineage>
        <taxon>Bacteria</taxon>
        <taxon>Pseudomonadati</taxon>
        <taxon>Pseudomonadota</taxon>
        <taxon>Alphaproteobacteria</taxon>
        <taxon>Hyphomicrobiales</taxon>
        <taxon>Nitrobacteraceae</taxon>
        <taxon>Rhodopseudomonas</taxon>
    </lineage>
</organism>
<keyword id="KW-0963">Cytoplasm</keyword>
<keyword id="KW-0255">Endonuclease</keyword>
<keyword id="KW-0378">Hydrolase</keyword>
<keyword id="KW-0479">Metal-binding</keyword>
<keyword id="KW-0540">Nuclease</keyword>
<keyword id="KW-0690">Ribosome biogenesis</keyword>
<keyword id="KW-0698">rRNA processing</keyword>
<keyword id="KW-0862">Zinc</keyword>
<name>YBEY_RHOPB</name>
<feature type="chain" id="PRO_0000284293" description="Endoribonuclease YbeY">
    <location>
        <begin position="1"/>
        <end position="168"/>
    </location>
</feature>
<feature type="binding site" evidence="1">
    <location>
        <position position="125"/>
    </location>
    <ligand>
        <name>Zn(2+)</name>
        <dbReference type="ChEBI" id="CHEBI:29105"/>
        <note>catalytic</note>
    </ligand>
</feature>
<feature type="binding site" evidence="1">
    <location>
        <position position="129"/>
    </location>
    <ligand>
        <name>Zn(2+)</name>
        <dbReference type="ChEBI" id="CHEBI:29105"/>
        <note>catalytic</note>
    </ligand>
</feature>
<feature type="binding site" evidence="1">
    <location>
        <position position="135"/>
    </location>
    <ligand>
        <name>Zn(2+)</name>
        <dbReference type="ChEBI" id="CHEBI:29105"/>
        <note>catalytic</note>
    </ligand>
</feature>
<proteinExistence type="inferred from homology"/>
<gene>
    <name evidence="1" type="primary">ybeY</name>
    <name type="ordered locus">RPC_0470</name>
</gene>
<reference key="1">
    <citation type="submission" date="2006-03" db="EMBL/GenBank/DDBJ databases">
        <title>Complete sequence of Rhodopseudomonas palustris BisB18.</title>
        <authorList>
            <consortium name="US DOE Joint Genome Institute"/>
            <person name="Copeland A."/>
            <person name="Lucas S."/>
            <person name="Lapidus A."/>
            <person name="Barry K."/>
            <person name="Detter J.C."/>
            <person name="Glavina del Rio T."/>
            <person name="Hammon N."/>
            <person name="Israni S."/>
            <person name="Dalin E."/>
            <person name="Tice H."/>
            <person name="Pitluck S."/>
            <person name="Chain P."/>
            <person name="Malfatti S."/>
            <person name="Shin M."/>
            <person name="Vergez L."/>
            <person name="Schmutz J."/>
            <person name="Larimer F."/>
            <person name="Land M."/>
            <person name="Hauser L."/>
            <person name="Pelletier D.A."/>
            <person name="Kyrpides N."/>
            <person name="Anderson I."/>
            <person name="Oda Y."/>
            <person name="Harwood C.S."/>
            <person name="Richardson P."/>
        </authorList>
    </citation>
    <scope>NUCLEOTIDE SEQUENCE [LARGE SCALE GENOMIC DNA]</scope>
    <source>
        <strain>BisB18</strain>
    </source>
</reference>